<keyword id="KW-0560">Oxidoreductase</keyword>
<keyword id="KW-0597">Phosphoprotein</keyword>
<keyword id="KW-1185">Reference proteome</keyword>
<keyword id="KW-0732">Signal</keyword>
<comment type="similarity">
    <text evidence="4">Belongs to the NAD(P)-dependent epimerase/dehydratase family. Dihydroflavonol-4-reductase subfamily.</text>
</comment>
<gene>
    <name type="ORF">SPBC1773.04</name>
</gene>
<accession>O94563</accession>
<sequence>MSELVLITGITGFVASHSAEALLSQGYRVRGTYRFQEKLDGLLKNRPEWEKKVEFVQVPDCRAPNAYVEAAKGVDYVIHAATEVHSNLEPPRKDPHELLHIAIQGCENALIAAAQEPKVKRFVYISSEAALKGPVNYFGDGHVFTEKDWNPKTLREAEESDDELLNYTVCKKLGERAMHAFVARNTPRFQAIALNPPLILGPVFHLQSVDNLNFSTWFFWQLIKGRYEVAPESKFFNYVDVRDLAEAQVKALTAKTDKDRFVISGGAFKNDDIVNVALKYFPQFKDKIAKPNGETSPCNYEVDASLSIKELGLTYRPAEETFKDATESLYKLAGLL</sequence>
<feature type="signal peptide" evidence="2">
    <location>
        <begin position="1"/>
        <end position="21"/>
    </location>
</feature>
<feature type="chain" id="PRO_0000316222" description="Putative uncharacterized oxidoreductase C1773.04">
    <location>
        <begin position="22"/>
        <end position="336"/>
    </location>
</feature>
<feature type="binding site" evidence="1">
    <location>
        <position position="38"/>
    </location>
    <ligand>
        <name>NADP(+)</name>
        <dbReference type="ChEBI" id="CHEBI:58349"/>
    </ligand>
</feature>
<feature type="binding site" evidence="1">
    <location>
        <position position="167"/>
    </location>
    <ligand>
        <name>NADP(+)</name>
        <dbReference type="ChEBI" id="CHEBI:58349"/>
    </ligand>
</feature>
<feature type="modified residue" description="Phosphothreonine" evidence="3">
    <location>
        <position position="153"/>
    </location>
</feature>
<proteinExistence type="evidence at protein level"/>
<protein>
    <recommendedName>
        <fullName>Putative uncharacterized oxidoreductase C1773.04</fullName>
        <ecNumber>1.1.1.-</ecNumber>
    </recommendedName>
</protein>
<name>YGD4_SCHPO</name>
<evidence type="ECO:0000250" key="1">
    <source>
        <dbReference type="UniProtKB" id="A0A059TC02"/>
    </source>
</evidence>
<evidence type="ECO:0000255" key="2"/>
<evidence type="ECO:0000269" key="3">
    <source>
    </source>
</evidence>
<evidence type="ECO:0000305" key="4"/>
<organism>
    <name type="scientific">Schizosaccharomyces pombe (strain 972 / ATCC 24843)</name>
    <name type="common">Fission yeast</name>
    <dbReference type="NCBI Taxonomy" id="284812"/>
    <lineage>
        <taxon>Eukaryota</taxon>
        <taxon>Fungi</taxon>
        <taxon>Dikarya</taxon>
        <taxon>Ascomycota</taxon>
        <taxon>Taphrinomycotina</taxon>
        <taxon>Schizosaccharomycetes</taxon>
        <taxon>Schizosaccharomycetales</taxon>
        <taxon>Schizosaccharomycetaceae</taxon>
        <taxon>Schizosaccharomyces</taxon>
    </lineage>
</organism>
<dbReference type="EC" id="1.1.1.-"/>
<dbReference type="EMBL" id="CU329671">
    <property type="protein sequence ID" value="CAA21909.1"/>
    <property type="molecule type" value="Genomic_DNA"/>
</dbReference>
<dbReference type="PIR" id="T39669">
    <property type="entry name" value="T39669"/>
</dbReference>
<dbReference type="RefSeq" id="NP_595119.1">
    <property type="nucleotide sequence ID" value="NM_001021026.2"/>
</dbReference>
<dbReference type="SMR" id="O94563"/>
<dbReference type="BioGRID" id="276287">
    <property type="interactions" value="4"/>
</dbReference>
<dbReference type="FunCoup" id="O94563">
    <property type="interactions" value="11"/>
</dbReference>
<dbReference type="STRING" id="284812.O94563"/>
<dbReference type="iPTMnet" id="O94563"/>
<dbReference type="PaxDb" id="4896-SPBC1773.04.1"/>
<dbReference type="EnsemblFungi" id="SPBC1773.04.1">
    <property type="protein sequence ID" value="SPBC1773.04.1:pep"/>
    <property type="gene ID" value="SPBC1773.04"/>
</dbReference>
<dbReference type="KEGG" id="spo:2539735"/>
<dbReference type="PomBase" id="SPBC1773.04"/>
<dbReference type="VEuPathDB" id="FungiDB:SPBC1773.04"/>
<dbReference type="eggNOG" id="KOG1502">
    <property type="taxonomic scope" value="Eukaryota"/>
</dbReference>
<dbReference type="HOGENOM" id="CLU_007383_9_2_1"/>
<dbReference type="InParanoid" id="O94563"/>
<dbReference type="OMA" id="ILGPVFH"/>
<dbReference type="PhylomeDB" id="O94563"/>
<dbReference type="PRO" id="PR:O94563"/>
<dbReference type="Proteomes" id="UP000002485">
    <property type="component" value="Chromosome II"/>
</dbReference>
<dbReference type="GO" id="GO:0043892">
    <property type="term" value="F:methylglyoxal reductase (NADPH) activity"/>
    <property type="evidence" value="ECO:0000266"/>
    <property type="project" value="PomBase"/>
</dbReference>
<dbReference type="GO" id="GO:0140041">
    <property type="term" value="P:cellular detoxification of methylglyoxal"/>
    <property type="evidence" value="ECO:0000305"/>
    <property type="project" value="PomBase"/>
</dbReference>
<dbReference type="GO" id="GO:0061727">
    <property type="term" value="P:methylglyoxal catabolic process to lactate"/>
    <property type="evidence" value="ECO:0000305"/>
    <property type="project" value="PomBase"/>
</dbReference>
<dbReference type="FunFam" id="3.40.50.720:FF:000644">
    <property type="entry name" value="NAD dependent epimerase/dehydratase family, putative"/>
    <property type="match status" value="1"/>
</dbReference>
<dbReference type="Gene3D" id="3.40.50.720">
    <property type="entry name" value="NAD(P)-binding Rossmann-like Domain"/>
    <property type="match status" value="1"/>
</dbReference>
<dbReference type="InterPro" id="IPR001509">
    <property type="entry name" value="Epimerase_deHydtase"/>
</dbReference>
<dbReference type="InterPro" id="IPR036291">
    <property type="entry name" value="NAD(P)-bd_dom_sf"/>
</dbReference>
<dbReference type="InterPro" id="IPR050425">
    <property type="entry name" value="NAD(P)_dehydrat-like"/>
</dbReference>
<dbReference type="PANTHER" id="PTHR10366">
    <property type="entry name" value="NAD DEPENDENT EPIMERASE/DEHYDRATASE"/>
    <property type="match status" value="1"/>
</dbReference>
<dbReference type="PANTHER" id="PTHR10366:SF564">
    <property type="entry name" value="STEROL-4-ALPHA-CARBOXYLATE 3-DEHYDROGENASE, DECARBOXYLATING"/>
    <property type="match status" value="1"/>
</dbReference>
<dbReference type="Pfam" id="PF01370">
    <property type="entry name" value="Epimerase"/>
    <property type="match status" value="1"/>
</dbReference>
<dbReference type="SUPFAM" id="SSF51735">
    <property type="entry name" value="NAD(P)-binding Rossmann-fold domains"/>
    <property type="match status" value="1"/>
</dbReference>
<reference key="1">
    <citation type="journal article" date="2002" name="Nature">
        <title>The genome sequence of Schizosaccharomyces pombe.</title>
        <authorList>
            <person name="Wood V."/>
            <person name="Gwilliam R."/>
            <person name="Rajandream M.A."/>
            <person name="Lyne M.H."/>
            <person name="Lyne R."/>
            <person name="Stewart A."/>
            <person name="Sgouros J.G."/>
            <person name="Peat N."/>
            <person name="Hayles J."/>
            <person name="Baker S.G."/>
            <person name="Basham D."/>
            <person name="Bowman S."/>
            <person name="Brooks K."/>
            <person name="Brown D."/>
            <person name="Brown S."/>
            <person name="Chillingworth T."/>
            <person name="Churcher C.M."/>
            <person name="Collins M."/>
            <person name="Connor R."/>
            <person name="Cronin A."/>
            <person name="Davis P."/>
            <person name="Feltwell T."/>
            <person name="Fraser A."/>
            <person name="Gentles S."/>
            <person name="Goble A."/>
            <person name="Hamlin N."/>
            <person name="Harris D.E."/>
            <person name="Hidalgo J."/>
            <person name="Hodgson G."/>
            <person name="Holroyd S."/>
            <person name="Hornsby T."/>
            <person name="Howarth S."/>
            <person name="Huckle E.J."/>
            <person name="Hunt S."/>
            <person name="Jagels K."/>
            <person name="James K.D."/>
            <person name="Jones L."/>
            <person name="Jones M."/>
            <person name="Leather S."/>
            <person name="McDonald S."/>
            <person name="McLean J."/>
            <person name="Mooney P."/>
            <person name="Moule S."/>
            <person name="Mungall K.L."/>
            <person name="Murphy L.D."/>
            <person name="Niblett D."/>
            <person name="Odell C."/>
            <person name="Oliver K."/>
            <person name="O'Neil S."/>
            <person name="Pearson D."/>
            <person name="Quail M.A."/>
            <person name="Rabbinowitsch E."/>
            <person name="Rutherford K.M."/>
            <person name="Rutter S."/>
            <person name="Saunders D."/>
            <person name="Seeger K."/>
            <person name="Sharp S."/>
            <person name="Skelton J."/>
            <person name="Simmonds M.N."/>
            <person name="Squares R."/>
            <person name="Squares S."/>
            <person name="Stevens K."/>
            <person name="Taylor K."/>
            <person name="Taylor R.G."/>
            <person name="Tivey A."/>
            <person name="Walsh S.V."/>
            <person name="Warren T."/>
            <person name="Whitehead S."/>
            <person name="Woodward J.R."/>
            <person name="Volckaert G."/>
            <person name="Aert R."/>
            <person name="Robben J."/>
            <person name="Grymonprez B."/>
            <person name="Weltjens I."/>
            <person name="Vanstreels E."/>
            <person name="Rieger M."/>
            <person name="Schaefer M."/>
            <person name="Mueller-Auer S."/>
            <person name="Gabel C."/>
            <person name="Fuchs M."/>
            <person name="Duesterhoeft A."/>
            <person name="Fritzc C."/>
            <person name="Holzer E."/>
            <person name="Moestl D."/>
            <person name="Hilbert H."/>
            <person name="Borzym K."/>
            <person name="Langer I."/>
            <person name="Beck A."/>
            <person name="Lehrach H."/>
            <person name="Reinhardt R."/>
            <person name="Pohl T.M."/>
            <person name="Eger P."/>
            <person name="Zimmermann W."/>
            <person name="Wedler H."/>
            <person name="Wambutt R."/>
            <person name="Purnelle B."/>
            <person name="Goffeau A."/>
            <person name="Cadieu E."/>
            <person name="Dreano S."/>
            <person name="Gloux S."/>
            <person name="Lelaure V."/>
            <person name="Mottier S."/>
            <person name="Galibert F."/>
            <person name="Aves S.J."/>
            <person name="Xiang Z."/>
            <person name="Hunt C."/>
            <person name="Moore K."/>
            <person name="Hurst S.M."/>
            <person name="Lucas M."/>
            <person name="Rochet M."/>
            <person name="Gaillardin C."/>
            <person name="Tallada V.A."/>
            <person name="Garzon A."/>
            <person name="Thode G."/>
            <person name="Daga R.R."/>
            <person name="Cruzado L."/>
            <person name="Jimenez J."/>
            <person name="Sanchez M."/>
            <person name="del Rey F."/>
            <person name="Benito J."/>
            <person name="Dominguez A."/>
            <person name="Revuelta J.L."/>
            <person name="Moreno S."/>
            <person name="Armstrong J."/>
            <person name="Forsburg S.L."/>
            <person name="Cerutti L."/>
            <person name="Lowe T."/>
            <person name="McCombie W.R."/>
            <person name="Paulsen I."/>
            <person name="Potashkin J."/>
            <person name="Shpakovski G.V."/>
            <person name="Ussery D."/>
            <person name="Barrell B.G."/>
            <person name="Nurse P."/>
        </authorList>
    </citation>
    <scope>NUCLEOTIDE SEQUENCE [LARGE SCALE GENOMIC DNA]</scope>
    <source>
        <strain>972 / ATCC 24843</strain>
    </source>
</reference>
<reference key="2">
    <citation type="journal article" date="2008" name="J. Proteome Res.">
        <title>Phosphoproteome analysis of fission yeast.</title>
        <authorList>
            <person name="Wilson-Grady J.T."/>
            <person name="Villen J."/>
            <person name="Gygi S.P."/>
        </authorList>
    </citation>
    <scope>PHOSPHORYLATION [LARGE SCALE ANALYSIS] AT THR-153</scope>
    <scope>IDENTIFICATION BY MASS SPECTROMETRY</scope>
</reference>